<accession>O67003</accession>
<dbReference type="EC" id="6.3.4.20" evidence="1"/>
<dbReference type="EMBL" id="AE000657">
    <property type="protein sequence ID" value="AAC06966.1"/>
    <property type="molecule type" value="Genomic_DNA"/>
</dbReference>
<dbReference type="PIR" id="H70371">
    <property type="entry name" value="H70371"/>
</dbReference>
<dbReference type="RefSeq" id="NP_213564.1">
    <property type="nucleotide sequence ID" value="NC_000918.1"/>
</dbReference>
<dbReference type="RefSeq" id="WP_010880502.1">
    <property type="nucleotide sequence ID" value="NC_000918.1"/>
</dbReference>
<dbReference type="SMR" id="O67003"/>
<dbReference type="FunCoup" id="O67003">
    <property type="interactions" value="143"/>
</dbReference>
<dbReference type="STRING" id="224324.aq_831"/>
<dbReference type="EnsemblBacteria" id="AAC06966">
    <property type="protein sequence ID" value="AAC06966"/>
    <property type="gene ID" value="aq_831"/>
</dbReference>
<dbReference type="KEGG" id="aae:aq_831"/>
<dbReference type="PATRIC" id="fig|224324.8.peg.649"/>
<dbReference type="eggNOG" id="COG0603">
    <property type="taxonomic scope" value="Bacteria"/>
</dbReference>
<dbReference type="HOGENOM" id="CLU_081854_1_1_0"/>
<dbReference type="InParanoid" id="O67003"/>
<dbReference type="OrthoDB" id="9789567at2"/>
<dbReference type="UniPathway" id="UPA00391"/>
<dbReference type="Proteomes" id="UP000000798">
    <property type="component" value="Chromosome"/>
</dbReference>
<dbReference type="GO" id="GO:0005524">
    <property type="term" value="F:ATP binding"/>
    <property type="evidence" value="ECO:0007669"/>
    <property type="project" value="UniProtKB-UniRule"/>
</dbReference>
<dbReference type="GO" id="GO:0016879">
    <property type="term" value="F:ligase activity, forming carbon-nitrogen bonds"/>
    <property type="evidence" value="ECO:0007669"/>
    <property type="project" value="UniProtKB-UniRule"/>
</dbReference>
<dbReference type="GO" id="GO:0008270">
    <property type="term" value="F:zinc ion binding"/>
    <property type="evidence" value="ECO:0007669"/>
    <property type="project" value="UniProtKB-UniRule"/>
</dbReference>
<dbReference type="GO" id="GO:0008616">
    <property type="term" value="P:queuosine biosynthetic process"/>
    <property type="evidence" value="ECO:0007669"/>
    <property type="project" value="UniProtKB-UniRule"/>
</dbReference>
<dbReference type="CDD" id="cd01995">
    <property type="entry name" value="QueC-like"/>
    <property type="match status" value="1"/>
</dbReference>
<dbReference type="Gene3D" id="3.40.50.620">
    <property type="entry name" value="HUPs"/>
    <property type="match status" value="1"/>
</dbReference>
<dbReference type="HAMAP" id="MF_01633">
    <property type="entry name" value="QueC"/>
    <property type="match status" value="1"/>
</dbReference>
<dbReference type="InterPro" id="IPR018317">
    <property type="entry name" value="QueC"/>
</dbReference>
<dbReference type="InterPro" id="IPR014729">
    <property type="entry name" value="Rossmann-like_a/b/a_fold"/>
</dbReference>
<dbReference type="NCBIfam" id="TIGR00364">
    <property type="entry name" value="7-cyano-7-deazaguanine synthase QueC"/>
    <property type="match status" value="1"/>
</dbReference>
<dbReference type="PANTHER" id="PTHR42914">
    <property type="entry name" value="7-CYANO-7-DEAZAGUANINE SYNTHASE"/>
    <property type="match status" value="1"/>
</dbReference>
<dbReference type="PANTHER" id="PTHR42914:SF1">
    <property type="entry name" value="7-CYANO-7-DEAZAGUANINE SYNTHASE"/>
    <property type="match status" value="1"/>
</dbReference>
<dbReference type="Pfam" id="PF06508">
    <property type="entry name" value="QueC"/>
    <property type="match status" value="1"/>
</dbReference>
<dbReference type="PIRSF" id="PIRSF006293">
    <property type="entry name" value="ExsB"/>
    <property type="match status" value="1"/>
</dbReference>
<dbReference type="SUPFAM" id="SSF52402">
    <property type="entry name" value="Adenine nucleotide alpha hydrolases-like"/>
    <property type="match status" value="1"/>
</dbReference>
<proteinExistence type="inferred from homology"/>
<sequence>MKKHDGIIVLLSGGMDSATLLWLAKREFKKVYAISFDYGQRHKVELKYAKELAKLAEVEDHFIVQVPFYTSLKGSALIDESVEVPKGEYPENEPPVTTVPMRNLIFLSIASAFADNLEVNYIGIGVHALDTPYPDCRPEFITAAEAAINAGSTFVAKKKERMHVYAPFLGMSKRDIALLGKELGVPFEKTYSCYMGTEPPCGECPTCIQREEALRGIL</sequence>
<gene>
    <name evidence="1" type="primary">queC</name>
    <name type="ordered locus">aq_831</name>
</gene>
<organism>
    <name type="scientific">Aquifex aeolicus (strain VF5)</name>
    <dbReference type="NCBI Taxonomy" id="224324"/>
    <lineage>
        <taxon>Bacteria</taxon>
        <taxon>Pseudomonadati</taxon>
        <taxon>Aquificota</taxon>
        <taxon>Aquificia</taxon>
        <taxon>Aquificales</taxon>
        <taxon>Aquificaceae</taxon>
        <taxon>Aquifex</taxon>
    </lineage>
</organism>
<reference key="1">
    <citation type="journal article" date="1998" name="Nature">
        <title>The complete genome of the hyperthermophilic bacterium Aquifex aeolicus.</title>
        <authorList>
            <person name="Deckert G."/>
            <person name="Warren P.V."/>
            <person name="Gaasterland T."/>
            <person name="Young W.G."/>
            <person name="Lenox A.L."/>
            <person name="Graham D.E."/>
            <person name="Overbeek R."/>
            <person name="Snead M.A."/>
            <person name="Keller M."/>
            <person name="Aujay M."/>
            <person name="Huber R."/>
            <person name="Feldman R.A."/>
            <person name="Short J.M."/>
            <person name="Olsen G.J."/>
            <person name="Swanson R.V."/>
        </authorList>
    </citation>
    <scope>NUCLEOTIDE SEQUENCE [LARGE SCALE GENOMIC DNA]</scope>
    <source>
        <strain>VF5</strain>
    </source>
</reference>
<keyword id="KW-0067">ATP-binding</keyword>
<keyword id="KW-0436">Ligase</keyword>
<keyword id="KW-0479">Metal-binding</keyword>
<keyword id="KW-0547">Nucleotide-binding</keyword>
<keyword id="KW-0671">Queuosine biosynthesis</keyword>
<keyword id="KW-1185">Reference proteome</keyword>
<keyword id="KW-0862">Zinc</keyword>
<evidence type="ECO:0000255" key="1">
    <source>
        <dbReference type="HAMAP-Rule" id="MF_01633"/>
    </source>
</evidence>
<comment type="function">
    <text evidence="1">Catalyzes the ATP-dependent conversion of 7-carboxy-7-deazaguanine (CDG) to 7-cyano-7-deazaguanine (preQ(0)).</text>
</comment>
<comment type="catalytic activity">
    <reaction evidence="1">
        <text>7-carboxy-7-deazaguanine + NH4(+) + ATP = 7-cyano-7-deazaguanine + ADP + phosphate + H2O + H(+)</text>
        <dbReference type="Rhea" id="RHEA:27982"/>
        <dbReference type="ChEBI" id="CHEBI:15377"/>
        <dbReference type="ChEBI" id="CHEBI:15378"/>
        <dbReference type="ChEBI" id="CHEBI:28938"/>
        <dbReference type="ChEBI" id="CHEBI:30616"/>
        <dbReference type="ChEBI" id="CHEBI:43474"/>
        <dbReference type="ChEBI" id="CHEBI:45075"/>
        <dbReference type="ChEBI" id="CHEBI:61036"/>
        <dbReference type="ChEBI" id="CHEBI:456216"/>
        <dbReference type="EC" id="6.3.4.20"/>
    </reaction>
</comment>
<comment type="cofactor">
    <cofactor evidence="1">
        <name>Zn(2+)</name>
        <dbReference type="ChEBI" id="CHEBI:29105"/>
    </cofactor>
    <text evidence="1">Binds 1 zinc ion per subunit.</text>
</comment>
<comment type="pathway">
    <text evidence="1">Purine metabolism; 7-cyano-7-deazaguanine biosynthesis.</text>
</comment>
<comment type="similarity">
    <text evidence="1">Belongs to the QueC family.</text>
</comment>
<protein>
    <recommendedName>
        <fullName evidence="1">7-cyano-7-deazaguanine synthase</fullName>
        <ecNumber evidence="1">6.3.4.20</ecNumber>
    </recommendedName>
    <alternativeName>
        <fullName evidence="1">7-cyano-7-carbaguanine synthase</fullName>
    </alternativeName>
    <alternativeName>
        <fullName evidence="1">PreQ(0) synthase</fullName>
    </alternativeName>
    <alternativeName>
        <fullName evidence="1">Queuosine biosynthesis protein QueC</fullName>
    </alternativeName>
</protein>
<feature type="chain" id="PRO_0000246792" description="7-cyano-7-deazaguanine synthase">
    <location>
        <begin position="1"/>
        <end position="218"/>
    </location>
</feature>
<feature type="binding site" evidence="1">
    <location>
        <begin position="11"/>
        <end position="21"/>
    </location>
    <ligand>
        <name>ATP</name>
        <dbReference type="ChEBI" id="CHEBI:30616"/>
    </ligand>
</feature>
<feature type="binding site" evidence="1">
    <location>
        <position position="193"/>
    </location>
    <ligand>
        <name>Zn(2+)</name>
        <dbReference type="ChEBI" id="CHEBI:29105"/>
    </ligand>
</feature>
<feature type="binding site" evidence="1">
    <location>
        <position position="201"/>
    </location>
    <ligand>
        <name>Zn(2+)</name>
        <dbReference type="ChEBI" id="CHEBI:29105"/>
    </ligand>
</feature>
<feature type="binding site" evidence="1">
    <location>
        <position position="204"/>
    </location>
    <ligand>
        <name>Zn(2+)</name>
        <dbReference type="ChEBI" id="CHEBI:29105"/>
    </ligand>
</feature>
<feature type="binding site" evidence="1">
    <location>
        <position position="207"/>
    </location>
    <ligand>
        <name>Zn(2+)</name>
        <dbReference type="ChEBI" id="CHEBI:29105"/>
    </ligand>
</feature>
<name>QUEC_AQUAE</name>